<gene>
    <name evidence="1" type="primary">hemA</name>
    <name type="ordered locus">Syncc9902_1228</name>
</gene>
<reference key="1">
    <citation type="submission" date="2005-08" db="EMBL/GenBank/DDBJ databases">
        <title>Complete sequence of Synechococcus sp. CC9902.</title>
        <authorList>
            <person name="Copeland A."/>
            <person name="Lucas S."/>
            <person name="Lapidus A."/>
            <person name="Barry K."/>
            <person name="Detter J.C."/>
            <person name="Glavina T."/>
            <person name="Hammon N."/>
            <person name="Israni S."/>
            <person name="Pitluck S."/>
            <person name="Martinez M."/>
            <person name="Schmutz J."/>
            <person name="Larimer F."/>
            <person name="Land M."/>
            <person name="Kyrpides N."/>
            <person name="Ivanova N."/>
            <person name="Richardson P."/>
        </authorList>
    </citation>
    <scope>NUCLEOTIDE SEQUENCE [LARGE SCALE GENOMIC DNA]</scope>
    <source>
        <strain>CC9902</strain>
    </source>
</reference>
<name>HEM1_SYNS9</name>
<proteinExistence type="inferred from homology"/>
<accession>Q3AXK4</accession>
<comment type="function">
    <text evidence="1">Catalyzes the NADPH-dependent reduction of glutamyl-tRNA(Glu) to glutamate 1-semialdehyde (GSA).</text>
</comment>
<comment type="catalytic activity">
    <reaction evidence="1">
        <text>(S)-4-amino-5-oxopentanoate + tRNA(Glu) + NADP(+) = L-glutamyl-tRNA(Glu) + NADPH + H(+)</text>
        <dbReference type="Rhea" id="RHEA:12344"/>
        <dbReference type="Rhea" id="RHEA-COMP:9663"/>
        <dbReference type="Rhea" id="RHEA-COMP:9680"/>
        <dbReference type="ChEBI" id="CHEBI:15378"/>
        <dbReference type="ChEBI" id="CHEBI:57501"/>
        <dbReference type="ChEBI" id="CHEBI:57783"/>
        <dbReference type="ChEBI" id="CHEBI:58349"/>
        <dbReference type="ChEBI" id="CHEBI:78442"/>
        <dbReference type="ChEBI" id="CHEBI:78520"/>
        <dbReference type="EC" id="1.2.1.70"/>
    </reaction>
</comment>
<comment type="pathway">
    <text evidence="1">Porphyrin-containing compound metabolism; protoporphyrin-IX biosynthesis; 5-aminolevulinate from L-glutamyl-tRNA(Glu): step 1/2.</text>
</comment>
<comment type="pathway">
    <text evidence="1">Porphyrin-containing compound metabolism; chlorophyll biosynthesis.</text>
</comment>
<comment type="subunit">
    <text evidence="1">Homodimer.</text>
</comment>
<comment type="domain">
    <text evidence="1">Possesses an unusual extended V-shaped dimeric structure with each monomer consisting of three distinct domains arranged along a curved 'spinal' alpha-helix. The N-terminal catalytic domain specifically recognizes the glutamate moiety of the substrate. The second domain is the NADPH-binding domain, and the third C-terminal domain is responsible for dimerization.</text>
</comment>
<comment type="miscellaneous">
    <text evidence="1">During catalysis, the active site Cys acts as a nucleophile attacking the alpha-carbonyl group of tRNA-bound glutamate with the formation of a thioester intermediate between enzyme and glutamate, and the concomitant release of tRNA(Glu). The thioester intermediate is finally reduced by direct hydride transfer from NADPH, to form the product GSA.</text>
</comment>
<comment type="similarity">
    <text evidence="1">Belongs to the glutamyl-tRNA reductase family.</text>
</comment>
<dbReference type="EC" id="1.2.1.70" evidence="1"/>
<dbReference type="EMBL" id="CP000097">
    <property type="protein sequence ID" value="ABB26192.1"/>
    <property type="molecule type" value="Genomic_DNA"/>
</dbReference>
<dbReference type="RefSeq" id="WP_011360019.1">
    <property type="nucleotide sequence ID" value="NC_007513.1"/>
</dbReference>
<dbReference type="SMR" id="Q3AXK4"/>
<dbReference type="STRING" id="316279.Syncc9902_1228"/>
<dbReference type="KEGG" id="sye:Syncc9902_1228"/>
<dbReference type="eggNOG" id="COG0373">
    <property type="taxonomic scope" value="Bacteria"/>
</dbReference>
<dbReference type="HOGENOM" id="CLU_035113_2_1_3"/>
<dbReference type="OrthoDB" id="110209at2"/>
<dbReference type="UniPathway" id="UPA00251">
    <property type="reaction ID" value="UER00316"/>
</dbReference>
<dbReference type="UniPathway" id="UPA00668"/>
<dbReference type="Proteomes" id="UP000002712">
    <property type="component" value="Chromosome"/>
</dbReference>
<dbReference type="GO" id="GO:0008883">
    <property type="term" value="F:glutamyl-tRNA reductase activity"/>
    <property type="evidence" value="ECO:0007669"/>
    <property type="project" value="UniProtKB-UniRule"/>
</dbReference>
<dbReference type="GO" id="GO:0050661">
    <property type="term" value="F:NADP binding"/>
    <property type="evidence" value="ECO:0007669"/>
    <property type="project" value="InterPro"/>
</dbReference>
<dbReference type="GO" id="GO:0015995">
    <property type="term" value="P:chlorophyll biosynthetic process"/>
    <property type="evidence" value="ECO:0007669"/>
    <property type="project" value="UniProtKB-UniRule"/>
</dbReference>
<dbReference type="GO" id="GO:0006782">
    <property type="term" value="P:protoporphyrinogen IX biosynthetic process"/>
    <property type="evidence" value="ECO:0007669"/>
    <property type="project" value="UniProtKB-UniRule"/>
</dbReference>
<dbReference type="CDD" id="cd05213">
    <property type="entry name" value="NAD_bind_Glutamyl_tRNA_reduct"/>
    <property type="match status" value="1"/>
</dbReference>
<dbReference type="FunFam" id="3.30.460.30:FF:000001">
    <property type="entry name" value="Glutamyl-tRNA reductase"/>
    <property type="match status" value="1"/>
</dbReference>
<dbReference type="Gene3D" id="3.30.460.30">
    <property type="entry name" value="Glutamyl-tRNA reductase, N-terminal domain"/>
    <property type="match status" value="1"/>
</dbReference>
<dbReference type="Gene3D" id="3.40.50.720">
    <property type="entry name" value="NAD(P)-binding Rossmann-like Domain"/>
    <property type="match status" value="1"/>
</dbReference>
<dbReference type="HAMAP" id="MF_00087">
    <property type="entry name" value="Glu_tRNA_reductase"/>
    <property type="match status" value="1"/>
</dbReference>
<dbReference type="InterPro" id="IPR000343">
    <property type="entry name" value="4pyrrol_synth_GluRdtase"/>
</dbReference>
<dbReference type="InterPro" id="IPR015896">
    <property type="entry name" value="4pyrrol_synth_GluRdtase_dimer"/>
</dbReference>
<dbReference type="InterPro" id="IPR015895">
    <property type="entry name" value="4pyrrol_synth_GluRdtase_N"/>
</dbReference>
<dbReference type="InterPro" id="IPR018214">
    <property type="entry name" value="GluRdtase_CS"/>
</dbReference>
<dbReference type="InterPro" id="IPR036453">
    <property type="entry name" value="GluRdtase_dimer_dom_sf"/>
</dbReference>
<dbReference type="InterPro" id="IPR036343">
    <property type="entry name" value="GluRdtase_N_sf"/>
</dbReference>
<dbReference type="InterPro" id="IPR036291">
    <property type="entry name" value="NAD(P)-bd_dom_sf"/>
</dbReference>
<dbReference type="InterPro" id="IPR006151">
    <property type="entry name" value="Shikm_DH/Glu-tRNA_Rdtase"/>
</dbReference>
<dbReference type="NCBIfam" id="TIGR01035">
    <property type="entry name" value="hemA"/>
    <property type="match status" value="1"/>
</dbReference>
<dbReference type="NCBIfam" id="NF000744">
    <property type="entry name" value="PRK00045.1-3"/>
    <property type="match status" value="1"/>
</dbReference>
<dbReference type="PANTHER" id="PTHR43120">
    <property type="entry name" value="GLUTAMYL-TRNA REDUCTASE 1, CHLOROPLASTIC"/>
    <property type="match status" value="1"/>
</dbReference>
<dbReference type="PANTHER" id="PTHR43120:SF1">
    <property type="entry name" value="GLUTAMYL-TRNA REDUCTASE 1, CHLOROPLASTIC"/>
    <property type="match status" value="1"/>
</dbReference>
<dbReference type="Pfam" id="PF00745">
    <property type="entry name" value="GlutR_dimer"/>
    <property type="match status" value="1"/>
</dbReference>
<dbReference type="Pfam" id="PF05201">
    <property type="entry name" value="GlutR_N"/>
    <property type="match status" value="1"/>
</dbReference>
<dbReference type="Pfam" id="PF01488">
    <property type="entry name" value="Shikimate_DH"/>
    <property type="match status" value="1"/>
</dbReference>
<dbReference type="PIRSF" id="PIRSF000445">
    <property type="entry name" value="4pyrrol_synth_GluRdtase"/>
    <property type="match status" value="1"/>
</dbReference>
<dbReference type="SUPFAM" id="SSF69742">
    <property type="entry name" value="Glutamyl tRNA-reductase catalytic, N-terminal domain"/>
    <property type="match status" value="1"/>
</dbReference>
<dbReference type="SUPFAM" id="SSF69075">
    <property type="entry name" value="Glutamyl tRNA-reductase dimerization domain"/>
    <property type="match status" value="1"/>
</dbReference>
<dbReference type="SUPFAM" id="SSF51735">
    <property type="entry name" value="NAD(P)-binding Rossmann-fold domains"/>
    <property type="match status" value="1"/>
</dbReference>
<dbReference type="PROSITE" id="PS00747">
    <property type="entry name" value="GLUTR"/>
    <property type="match status" value="1"/>
</dbReference>
<feature type="chain" id="PRO_1000004714" description="Glutamyl-tRNA reductase">
    <location>
        <begin position="1"/>
        <end position="432"/>
    </location>
</feature>
<feature type="active site" description="Nucleophile" evidence="1">
    <location>
        <position position="50"/>
    </location>
</feature>
<feature type="binding site" evidence="1">
    <location>
        <begin position="49"/>
        <end position="52"/>
    </location>
    <ligand>
        <name>substrate</name>
    </ligand>
</feature>
<feature type="binding site" evidence="1">
    <location>
        <position position="109"/>
    </location>
    <ligand>
        <name>substrate</name>
    </ligand>
</feature>
<feature type="binding site" evidence="1">
    <location>
        <begin position="114"/>
        <end position="116"/>
    </location>
    <ligand>
        <name>substrate</name>
    </ligand>
</feature>
<feature type="binding site" evidence="1">
    <location>
        <position position="120"/>
    </location>
    <ligand>
        <name>substrate</name>
    </ligand>
</feature>
<feature type="binding site" evidence="1">
    <location>
        <begin position="198"/>
        <end position="203"/>
    </location>
    <ligand>
        <name>NADP(+)</name>
        <dbReference type="ChEBI" id="CHEBI:58349"/>
    </ligand>
</feature>
<feature type="site" description="Important for activity" evidence="1">
    <location>
        <position position="99"/>
    </location>
</feature>
<organism>
    <name type="scientific">Synechococcus sp. (strain CC9902)</name>
    <dbReference type="NCBI Taxonomy" id="316279"/>
    <lineage>
        <taxon>Bacteria</taxon>
        <taxon>Bacillati</taxon>
        <taxon>Cyanobacteriota</taxon>
        <taxon>Cyanophyceae</taxon>
        <taxon>Synechococcales</taxon>
        <taxon>Synechococcaceae</taxon>
        <taxon>Synechococcus</taxon>
    </lineage>
</organism>
<sequence>MHIAVVGLSHRTAPVEIRERLSIPEQSMEMSLKTLRGNDQVLEASILSTCNRLEIYTLVRHPELGVGAVNEFLSNHSGLQTGELSPHLFNFHHQDAVDHLLRVAAGLDSLVLGEGQILSQVKKMMRLGQEHKSLGPILNRLLTQAVTTGKKVRSETNLGTGAVSISSAAVELAQLKLGQSRGVDDLVSLESEQIAVVGAGRMSRLLLQHLQAKGASGVVLVNRTVETAERLANDFPDLSVECRPLTDLNTFLSTSSLVFTSTAAEDPIIDASRLKPLNRRSQLRLIDIGVPRNVAADAATVDGVESHDVDDLEEVVARNQEARQAIAREAEHLLQDEAQQFLDWWDSLEAVPTINQLRSSMETIRTEELQKALSRMGPDFSARERKVVEALSKGIINKILHTPVTKLRASQARSERQQALRAVERLFDLDPS</sequence>
<protein>
    <recommendedName>
        <fullName evidence="1">Glutamyl-tRNA reductase</fullName>
        <shortName evidence="1">GluTR</shortName>
        <ecNumber evidence="1">1.2.1.70</ecNumber>
    </recommendedName>
</protein>
<keyword id="KW-0149">Chlorophyll biosynthesis</keyword>
<keyword id="KW-0521">NADP</keyword>
<keyword id="KW-0560">Oxidoreductase</keyword>
<keyword id="KW-0627">Porphyrin biosynthesis</keyword>
<keyword id="KW-1185">Reference proteome</keyword>
<evidence type="ECO:0000255" key="1">
    <source>
        <dbReference type="HAMAP-Rule" id="MF_00087"/>
    </source>
</evidence>